<dbReference type="EMBL" id="K02562">
    <property type="protein sequence ID" value="AAA47063.2"/>
    <property type="molecule type" value="Genomic_DNA"/>
</dbReference>
<dbReference type="EMBL" id="M30540">
    <property type="protein sequence ID" value="AAA47066.1"/>
    <property type="molecule type" value="Genomic_DNA"/>
</dbReference>
<dbReference type="PIR" id="A03617">
    <property type="entry name" value="TVVPAL"/>
</dbReference>
<dbReference type="RefSeq" id="NP_848009.2">
    <property type="nucleotide sequence ID" value="NC_004763.2"/>
</dbReference>
<dbReference type="SMR" id="P04009"/>
<dbReference type="GeneID" id="1494438"/>
<dbReference type="KEGG" id="vg:1494438"/>
<dbReference type="Proteomes" id="UP000126011">
    <property type="component" value="Segment"/>
</dbReference>
<dbReference type="Proteomes" id="UP000173801">
    <property type="component" value="Segment"/>
</dbReference>
<dbReference type="GO" id="GO:0030430">
    <property type="term" value="C:host cell cytoplasm"/>
    <property type="evidence" value="ECO:0007669"/>
    <property type="project" value="UniProtKB-SubCell"/>
</dbReference>
<dbReference type="GO" id="GO:0042025">
    <property type="term" value="C:host cell nucleus"/>
    <property type="evidence" value="ECO:0007669"/>
    <property type="project" value="UniProtKB-SubCell"/>
</dbReference>
<dbReference type="GO" id="GO:0008270">
    <property type="term" value="F:zinc ion binding"/>
    <property type="evidence" value="ECO:0007669"/>
    <property type="project" value="UniProtKB-KW"/>
</dbReference>
<dbReference type="CDD" id="cd06257">
    <property type="entry name" value="DnaJ"/>
    <property type="match status" value="1"/>
</dbReference>
<dbReference type="Gene3D" id="1.10.287.110">
    <property type="entry name" value="DnaJ domain"/>
    <property type="match status" value="1"/>
</dbReference>
<dbReference type="Gene3D" id="1.20.120.1860">
    <property type="entry name" value="Small t-antigen, unique domain"/>
    <property type="match status" value="1"/>
</dbReference>
<dbReference type="InterPro" id="IPR001623">
    <property type="entry name" value="DnaJ_domain"/>
</dbReference>
<dbReference type="InterPro" id="IPR036869">
    <property type="entry name" value="J_dom_sf"/>
</dbReference>
<dbReference type="InterPro" id="IPR003354">
    <property type="entry name" value="Papo_T_antigen"/>
</dbReference>
<dbReference type="InterPro" id="IPR036092">
    <property type="entry name" value="Papo_T_antigensf"/>
</dbReference>
<dbReference type="Pfam" id="PF02380">
    <property type="entry name" value="Papo_T_antigen"/>
    <property type="match status" value="1"/>
</dbReference>
<dbReference type="SMART" id="SM00271">
    <property type="entry name" value="DnaJ"/>
    <property type="match status" value="1"/>
</dbReference>
<dbReference type="SUPFAM" id="SSF46565">
    <property type="entry name" value="Chaperone J-domain"/>
    <property type="match status" value="1"/>
</dbReference>
<dbReference type="SUPFAM" id="SSF161240">
    <property type="entry name" value="T-antigen specific domain-like"/>
    <property type="match status" value="1"/>
</dbReference>
<dbReference type="PROSITE" id="PS50076">
    <property type="entry name" value="DNAJ_2"/>
    <property type="match status" value="1"/>
</dbReference>
<proteinExistence type="inferred from homology"/>
<sequence length="189" mass="22171">MDQTLSKEERNELMDLLQITRAAWGNLSMMKKAYKNVSKLYHPDKGGDSAKMQRLNELFQRVQVTLMEIRSQCGSSSSQVAWFFWDENFRTLGAFLGEKFNEKIIGLYPTCTKFVRANCNCIVCLLKKQHAGTKKNLKKPCLVWGECWCYKCYLVWFGFPEDFTSFRYWTLLMANMDLSMLKLWTELGF</sequence>
<feature type="chain" id="PRO_0000115057" description="Small t antigen">
    <location>
        <begin position="1"/>
        <end position="189"/>
    </location>
</feature>
<feature type="domain" description="J" evidence="2">
    <location>
        <begin position="12"/>
        <end position="75"/>
    </location>
</feature>
<feature type="zinc finger region" description="C4-type; atypical">
    <location>
        <begin position="111"/>
        <end position="124"/>
    </location>
</feature>
<feature type="zinc finger region" description="H1C3-type; atypical">
    <location>
        <begin position="130"/>
        <end position="152"/>
    </location>
</feature>
<feature type="modified residue" description="N-acetylmethionine; by host" evidence="1">
    <location>
        <position position="1"/>
    </location>
</feature>
<organism>
    <name type="scientific">B-lymphotropic polyomavirus</name>
    <name type="common">LPV</name>
    <dbReference type="NCBI Taxonomy" id="332091"/>
    <lineage>
        <taxon>Viruses</taxon>
        <taxon>Monodnaviria</taxon>
        <taxon>Shotokuvirae</taxon>
        <taxon>Cossaviricota</taxon>
        <taxon>Papovaviricetes</taxon>
        <taxon>Sepolyvirales</taxon>
        <taxon>Polyomaviridae</taxon>
        <taxon>African green monkey polyomavirus</taxon>
    </lineage>
</organism>
<organismHost>
    <name type="scientific">Chlorocebus aethiops</name>
    <name type="common">Green monkey</name>
    <name type="synonym">Cercopithecus aethiops</name>
    <dbReference type="NCBI Taxonomy" id="9534"/>
</organismHost>
<keyword id="KW-0007">Acetylation</keyword>
<keyword id="KW-0010">Activator</keyword>
<keyword id="KW-0025">Alternative splicing</keyword>
<keyword id="KW-0244">Early protein</keyword>
<keyword id="KW-1035">Host cytoplasm</keyword>
<keyword id="KW-1048">Host nucleus</keyword>
<keyword id="KW-0945">Host-virus interaction</keyword>
<keyword id="KW-0479">Metal-binding</keyword>
<keyword id="KW-0553">Oncogene</keyword>
<keyword id="KW-0597">Phosphoprotein</keyword>
<keyword id="KW-1185">Reference proteome</keyword>
<keyword id="KW-0804">Transcription</keyword>
<keyword id="KW-0805">Transcription regulation</keyword>
<keyword id="KW-0862">Zinc</keyword>
<keyword id="KW-0863">Zinc-finger</keyword>
<reference key="1">
    <citation type="journal article" date="1985" name="Virology">
        <title>Complete DNA sequence of lymphotropic papovavirus: prototype of a new species of the polyomavirus genus.</title>
        <authorList>
            <person name="Pawlita M."/>
            <person name="Clad A."/>
            <person name="zur Hausen H."/>
        </authorList>
    </citation>
    <scope>NUCLEOTIDE SEQUENCE [GENOMIC DNA]</scope>
</reference>
<reference key="2">
    <citation type="submission" date="2013-08" db="EMBL/GenBank/DDBJ databases">
        <authorList>
            <person name="Pawlita M."/>
            <person name="Clad A."/>
            <person name="zur Hausen H."/>
        </authorList>
    </citation>
    <scope>SEQUENCE REVISION</scope>
</reference>
<reference key="3">
    <citation type="journal article" date="1986" name="Jpn. J. Med. Sci. Biol.">
        <title>Monkey B-lymphotropic papovavirus genome: the entire DNA sequence and variable regions.</title>
        <authorList>
            <person name="Furuno A."/>
            <person name="Kanda T."/>
            <person name="Yoshiike K."/>
        </authorList>
    </citation>
    <scope>NUCLEOTIDE SEQUENCE [GENOMIC DNA]</scope>
</reference>
<comment type="function">
    <text evidence="1">Promotes efficient viral genome replication by accelerating both G1 and S phase progression of the cell cycle. Inhibits host PP2A by binding to the A subunit, thereby displacing lower affinity regulatory B subunit. Inactivation of PP2A in turn results in the transactivation of cyclin A and cyclin D1 promoters. Late during the infection cycle, ST may induce dephosphorylation of host MTOR, leading to the inhibition of cap-dependent translation. May establish and maintain high levels of viral genomes during persistent infection in cell culture.</text>
</comment>
<comment type="subunit">
    <text evidence="1">Interacts with host PPP2R1A; the interaction inhibits PP2A activity.</text>
</comment>
<comment type="subcellular location">
    <subcellularLocation>
        <location>Host cytoplasm</location>
    </subcellularLocation>
    <subcellularLocation>
        <location evidence="1">Host nucleus</location>
    </subcellularLocation>
</comment>
<comment type="alternative products">
    <event type="alternative splicing"/>
    <isoform>
        <id>P04009-1</id>
        <name>Small t antigen</name>
        <sequence type="displayed"/>
    </isoform>
    <isoform>
        <id>P04008-1</id>
        <name>Large T antigen</name>
        <sequence type="external"/>
    </isoform>
</comment>
<comment type="domain">
    <text evidence="1">The common region of ST and LT proteins comprises the J domain. This domain is essential for multiple viral activities, including virion assembly, viral DNA replication, transformation and transcriptional activation. This domain is also required for cyclin A-transactivating activity of ST.</text>
</comment>
<protein>
    <recommendedName>
        <fullName>Small t antigen</fullName>
        <shortName>ST</shortName>
        <shortName>ST-AG</shortName>
    </recommendedName>
</protein>
<accession>P04009</accession>
<name>ST_POVLY</name>
<evidence type="ECO:0000250" key="1">
    <source>
        <dbReference type="UniProtKB" id="P03081"/>
    </source>
</evidence>
<evidence type="ECO:0000255" key="2">
    <source>
        <dbReference type="PROSITE-ProRule" id="PRU00286"/>
    </source>
</evidence>